<proteinExistence type="inferred from homology"/>
<organism>
    <name type="scientific">Chlamydia pneumoniae</name>
    <name type="common">Chlamydophila pneumoniae</name>
    <dbReference type="NCBI Taxonomy" id="83558"/>
    <lineage>
        <taxon>Bacteria</taxon>
        <taxon>Pseudomonadati</taxon>
        <taxon>Chlamydiota</taxon>
        <taxon>Chlamydiia</taxon>
        <taxon>Chlamydiales</taxon>
        <taxon>Chlamydiaceae</taxon>
        <taxon>Chlamydia/Chlamydophila group</taxon>
        <taxon>Chlamydia</taxon>
    </lineage>
</organism>
<comment type="function">
    <text evidence="1">ATP-dependent specificity component of the Clp protease. It directs the protease to specific substrates. Can perform chaperone functions in the absence of ClpP.</text>
</comment>
<comment type="subunit">
    <text evidence="1">Component of the ClpX-ClpP complex. Forms a hexameric ring that, in the presence of ATP, binds to fourteen ClpP subunits assembled into a disk-like structure with a central cavity, resembling the structure of eukaryotic proteasomes.</text>
</comment>
<comment type="similarity">
    <text evidence="1">Belongs to the ClpX chaperone family.</text>
</comment>
<reference key="1">
    <citation type="journal article" date="1999" name="Nat. Genet.">
        <title>Comparative genomes of Chlamydia pneumoniae and C. trachomatis.</title>
        <authorList>
            <person name="Kalman S."/>
            <person name="Mitchell W.P."/>
            <person name="Marathe R."/>
            <person name="Lammel C.J."/>
            <person name="Fan J."/>
            <person name="Hyman R.W."/>
            <person name="Olinger L."/>
            <person name="Grimwood J."/>
            <person name="Davis R.W."/>
            <person name="Stephens R.S."/>
        </authorList>
    </citation>
    <scope>NUCLEOTIDE SEQUENCE [LARGE SCALE GENOMIC DNA]</scope>
    <source>
        <strain>CWL029</strain>
    </source>
</reference>
<reference key="2">
    <citation type="journal article" date="2000" name="Nucleic Acids Res.">
        <title>Genome sequences of Chlamydia trachomatis MoPn and Chlamydia pneumoniae AR39.</title>
        <authorList>
            <person name="Read T.D."/>
            <person name="Brunham R.C."/>
            <person name="Shen C."/>
            <person name="Gill S.R."/>
            <person name="Heidelberg J.F."/>
            <person name="White O."/>
            <person name="Hickey E.K."/>
            <person name="Peterson J.D."/>
            <person name="Utterback T.R."/>
            <person name="Berry K.J."/>
            <person name="Bass S."/>
            <person name="Linher K.D."/>
            <person name="Weidman J.F."/>
            <person name="Khouri H.M."/>
            <person name="Craven B."/>
            <person name="Bowman C."/>
            <person name="Dodson R.J."/>
            <person name="Gwinn M.L."/>
            <person name="Nelson W.C."/>
            <person name="DeBoy R.T."/>
            <person name="Kolonay J.F."/>
            <person name="McClarty G."/>
            <person name="Salzberg S.L."/>
            <person name="Eisen J.A."/>
            <person name="Fraser C.M."/>
        </authorList>
    </citation>
    <scope>NUCLEOTIDE SEQUENCE [LARGE SCALE GENOMIC DNA]</scope>
    <source>
        <strain>AR39</strain>
    </source>
</reference>
<reference key="3">
    <citation type="journal article" date="2000" name="Nucleic Acids Res.">
        <title>Comparison of whole genome sequences of Chlamydia pneumoniae J138 from Japan and CWL029 from USA.</title>
        <authorList>
            <person name="Shirai M."/>
            <person name="Hirakawa H."/>
            <person name="Kimoto M."/>
            <person name="Tabuchi M."/>
            <person name="Kishi F."/>
            <person name="Ouchi K."/>
            <person name="Shiba T."/>
            <person name="Ishii K."/>
            <person name="Hattori M."/>
            <person name="Kuhara S."/>
            <person name="Nakazawa T."/>
        </authorList>
    </citation>
    <scope>NUCLEOTIDE SEQUENCE [LARGE SCALE GENOMIC DNA]</scope>
    <source>
        <strain>J138</strain>
    </source>
</reference>
<reference key="4">
    <citation type="submission" date="2002-05" db="EMBL/GenBank/DDBJ databases">
        <title>The genome sequence of Chlamydia pneumoniae TW183 and comparison with other Chlamydia strains based on whole genome sequence analysis.</title>
        <authorList>
            <person name="Geng M.M."/>
            <person name="Schuhmacher A."/>
            <person name="Muehldorfer I."/>
            <person name="Bensch K.W."/>
            <person name="Schaefer K.P."/>
            <person name="Schneider S."/>
            <person name="Pohl T."/>
            <person name="Essig A."/>
            <person name="Marre R."/>
            <person name="Melchers K."/>
        </authorList>
    </citation>
    <scope>NUCLEOTIDE SEQUENCE [LARGE SCALE GENOMIC DNA]</scope>
    <source>
        <strain>TW-183</strain>
    </source>
</reference>
<keyword id="KW-0067">ATP-binding</keyword>
<keyword id="KW-0143">Chaperone</keyword>
<keyword id="KW-0479">Metal-binding</keyword>
<keyword id="KW-0547">Nucleotide-binding</keyword>
<keyword id="KW-0862">Zinc</keyword>
<sequence>MNKKNLTICSFCGRSEKDVEKLIAGPSVYICDYCIKLCSGILDKKPSSTISSAPVSETPSQPSDLRVLTPKEIKKHIDEYVIGQERAKKTIAVAVYNHYKRIRALLHNKQVSYGKSNVLLLGPTGSGKTLIAKTLAKILDVPFTIADATTLTEAGYVGEDVENIVLRLLQAADYDVARAERGIIYIDEIDKIGRTTANVSITRDVSGEGVQQALLKIVEGTTANVPPKGGRKHPNQEYIRVNTENILFIVGGAFVNLDKIIAKRLGKTTIGFSDDQADLSQKTRDHLLAKVETEDLIAFGMIPEFVGRFNCIVNCEELSLDELVAILTEPTNAIVKQYMELFAEENVKLVFKKEALYAIAKKAKQAKTGARALGMILENLLRDLMFEIPSDPTVEAIHIQEDTIAENKAPIIIRRTPEAIA</sequence>
<protein>
    <recommendedName>
        <fullName evidence="1">ATP-dependent Clp protease ATP-binding subunit ClpX</fullName>
    </recommendedName>
</protein>
<gene>
    <name evidence="1" type="primary">clpX</name>
    <name type="ordered locus">CPn_0846</name>
    <name type="ordered locus">CP_1023</name>
    <name type="ordered locus">CpB0875</name>
</gene>
<name>CLPX_CHLPN</name>
<feature type="chain" id="PRO_0000160338" description="ATP-dependent Clp protease ATP-binding subunit ClpX">
    <location>
        <begin position="1"/>
        <end position="421"/>
    </location>
</feature>
<feature type="domain" description="ClpX-type ZB" evidence="2">
    <location>
        <begin position="1"/>
        <end position="50"/>
    </location>
</feature>
<feature type="binding site" evidence="2">
    <location>
        <position position="9"/>
    </location>
    <ligand>
        <name>Zn(2+)</name>
        <dbReference type="ChEBI" id="CHEBI:29105"/>
    </ligand>
</feature>
<feature type="binding site" evidence="2">
    <location>
        <position position="12"/>
    </location>
    <ligand>
        <name>Zn(2+)</name>
        <dbReference type="ChEBI" id="CHEBI:29105"/>
    </ligand>
</feature>
<feature type="binding site" evidence="2">
    <location>
        <position position="31"/>
    </location>
    <ligand>
        <name>Zn(2+)</name>
        <dbReference type="ChEBI" id="CHEBI:29105"/>
    </ligand>
</feature>
<feature type="binding site" evidence="2">
    <location>
        <position position="34"/>
    </location>
    <ligand>
        <name>Zn(2+)</name>
        <dbReference type="ChEBI" id="CHEBI:29105"/>
    </ligand>
</feature>
<feature type="binding site" evidence="1">
    <location>
        <begin position="123"/>
        <end position="130"/>
    </location>
    <ligand>
        <name>ATP</name>
        <dbReference type="ChEBI" id="CHEBI:30616"/>
    </ligand>
</feature>
<dbReference type="EMBL" id="AE001363">
    <property type="protein sequence ID" value="AAD18984.1"/>
    <property type="molecule type" value="Genomic_DNA"/>
</dbReference>
<dbReference type="EMBL" id="AE002161">
    <property type="protein sequence ID" value="AAF38799.1"/>
    <property type="molecule type" value="Genomic_DNA"/>
</dbReference>
<dbReference type="EMBL" id="BA000008">
    <property type="protein sequence ID" value="BAA99054.1"/>
    <property type="molecule type" value="Genomic_DNA"/>
</dbReference>
<dbReference type="EMBL" id="AE009440">
    <property type="protein sequence ID" value="AAP98804.1"/>
    <property type="molecule type" value="Genomic_DNA"/>
</dbReference>
<dbReference type="PIR" id="D86596">
    <property type="entry name" value="D86596"/>
</dbReference>
<dbReference type="PIR" id="F72028">
    <property type="entry name" value="F72028"/>
</dbReference>
<dbReference type="RefSeq" id="NP_225041.1">
    <property type="nucleotide sequence ID" value="NC_000922.1"/>
</dbReference>
<dbReference type="RefSeq" id="WP_010883481.1">
    <property type="nucleotide sequence ID" value="NZ_LN847257.1"/>
</dbReference>
<dbReference type="SMR" id="Q9Z760"/>
<dbReference type="STRING" id="406984.CPK_ORF00252"/>
<dbReference type="GeneID" id="45050898"/>
<dbReference type="KEGG" id="cpa:CP_1023"/>
<dbReference type="KEGG" id="cpj:clpX"/>
<dbReference type="KEGG" id="cpn:CPn_0846"/>
<dbReference type="KEGG" id="cpt:CpB0875"/>
<dbReference type="PATRIC" id="fig|115713.3.peg.926"/>
<dbReference type="eggNOG" id="COG1219">
    <property type="taxonomic scope" value="Bacteria"/>
</dbReference>
<dbReference type="HOGENOM" id="CLU_014218_8_2_0"/>
<dbReference type="OrthoDB" id="9804062at2"/>
<dbReference type="Proteomes" id="UP000000583">
    <property type="component" value="Chromosome"/>
</dbReference>
<dbReference type="Proteomes" id="UP000000801">
    <property type="component" value="Chromosome"/>
</dbReference>
<dbReference type="GO" id="GO:0009376">
    <property type="term" value="C:HslUV protease complex"/>
    <property type="evidence" value="ECO:0007669"/>
    <property type="project" value="TreeGrafter"/>
</dbReference>
<dbReference type="GO" id="GO:0005524">
    <property type="term" value="F:ATP binding"/>
    <property type="evidence" value="ECO:0007669"/>
    <property type="project" value="UniProtKB-UniRule"/>
</dbReference>
<dbReference type="GO" id="GO:0016887">
    <property type="term" value="F:ATP hydrolysis activity"/>
    <property type="evidence" value="ECO:0007669"/>
    <property type="project" value="InterPro"/>
</dbReference>
<dbReference type="GO" id="GO:0140662">
    <property type="term" value="F:ATP-dependent protein folding chaperone"/>
    <property type="evidence" value="ECO:0007669"/>
    <property type="project" value="InterPro"/>
</dbReference>
<dbReference type="GO" id="GO:0046983">
    <property type="term" value="F:protein dimerization activity"/>
    <property type="evidence" value="ECO:0007669"/>
    <property type="project" value="InterPro"/>
</dbReference>
<dbReference type="GO" id="GO:0051082">
    <property type="term" value="F:unfolded protein binding"/>
    <property type="evidence" value="ECO:0007669"/>
    <property type="project" value="UniProtKB-UniRule"/>
</dbReference>
<dbReference type="GO" id="GO:0008270">
    <property type="term" value="F:zinc ion binding"/>
    <property type="evidence" value="ECO:0007669"/>
    <property type="project" value="InterPro"/>
</dbReference>
<dbReference type="GO" id="GO:0051301">
    <property type="term" value="P:cell division"/>
    <property type="evidence" value="ECO:0007669"/>
    <property type="project" value="TreeGrafter"/>
</dbReference>
<dbReference type="GO" id="GO:0051603">
    <property type="term" value="P:proteolysis involved in protein catabolic process"/>
    <property type="evidence" value="ECO:0007669"/>
    <property type="project" value="TreeGrafter"/>
</dbReference>
<dbReference type="CDD" id="cd19497">
    <property type="entry name" value="RecA-like_ClpX"/>
    <property type="match status" value="1"/>
</dbReference>
<dbReference type="FunFam" id="1.10.8.60:FF:000002">
    <property type="entry name" value="ATP-dependent Clp protease ATP-binding subunit ClpX"/>
    <property type="match status" value="1"/>
</dbReference>
<dbReference type="FunFam" id="3.40.50.300:FF:000005">
    <property type="entry name" value="ATP-dependent Clp protease ATP-binding subunit ClpX"/>
    <property type="match status" value="1"/>
</dbReference>
<dbReference type="Gene3D" id="1.10.8.60">
    <property type="match status" value="1"/>
</dbReference>
<dbReference type="Gene3D" id="6.20.220.10">
    <property type="entry name" value="ClpX chaperone, C4-type zinc finger domain"/>
    <property type="match status" value="1"/>
</dbReference>
<dbReference type="Gene3D" id="3.40.50.300">
    <property type="entry name" value="P-loop containing nucleotide triphosphate hydrolases"/>
    <property type="match status" value="1"/>
</dbReference>
<dbReference type="HAMAP" id="MF_00175">
    <property type="entry name" value="ClpX"/>
    <property type="match status" value="1"/>
</dbReference>
<dbReference type="InterPro" id="IPR003593">
    <property type="entry name" value="AAA+_ATPase"/>
</dbReference>
<dbReference type="InterPro" id="IPR050052">
    <property type="entry name" value="ATP-dep_Clp_protease_ClpX"/>
</dbReference>
<dbReference type="InterPro" id="IPR003959">
    <property type="entry name" value="ATPase_AAA_core"/>
</dbReference>
<dbReference type="InterPro" id="IPR019489">
    <property type="entry name" value="Clp_ATPase_C"/>
</dbReference>
<dbReference type="InterPro" id="IPR004487">
    <property type="entry name" value="Clp_protease_ATP-bd_su_ClpX"/>
</dbReference>
<dbReference type="InterPro" id="IPR046425">
    <property type="entry name" value="ClpX_bact"/>
</dbReference>
<dbReference type="InterPro" id="IPR027417">
    <property type="entry name" value="P-loop_NTPase"/>
</dbReference>
<dbReference type="InterPro" id="IPR010603">
    <property type="entry name" value="Znf_CppX_C4"/>
</dbReference>
<dbReference type="InterPro" id="IPR038366">
    <property type="entry name" value="Znf_CppX_C4_sf"/>
</dbReference>
<dbReference type="NCBIfam" id="TIGR00382">
    <property type="entry name" value="clpX"/>
    <property type="match status" value="1"/>
</dbReference>
<dbReference type="NCBIfam" id="NF003745">
    <property type="entry name" value="PRK05342.1"/>
    <property type="match status" value="1"/>
</dbReference>
<dbReference type="PANTHER" id="PTHR48102:SF7">
    <property type="entry name" value="ATP-DEPENDENT CLP PROTEASE ATP-BINDING SUBUNIT CLPX-LIKE, MITOCHONDRIAL"/>
    <property type="match status" value="1"/>
</dbReference>
<dbReference type="PANTHER" id="PTHR48102">
    <property type="entry name" value="ATP-DEPENDENT CLP PROTEASE ATP-BINDING SUBUNIT CLPX-LIKE, MITOCHONDRIAL-RELATED"/>
    <property type="match status" value="1"/>
</dbReference>
<dbReference type="Pfam" id="PF07724">
    <property type="entry name" value="AAA_2"/>
    <property type="match status" value="1"/>
</dbReference>
<dbReference type="Pfam" id="PF10431">
    <property type="entry name" value="ClpB_D2-small"/>
    <property type="match status" value="1"/>
</dbReference>
<dbReference type="Pfam" id="PF06689">
    <property type="entry name" value="zf-C4_ClpX"/>
    <property type="match status" value="1"/>
</dbReference>
<dbReference type="SMART" id="SM00382">
    <property type="entry name" value="AAA"/>
    <property type="match status" value="1"/>
</dbReference>
<dbReference type="SMART" id="SM01086">
    <property type="entry name" value="ClpB_D2-small"/>
    <property type="match status" value="1"/>
</dbReference>
<dbReference type="SMART" id="SM00994">
    <property type="entry name" value="zf-C4_ClpX"/>
    <property type="match status" value="1"/>
</dbReference>
<dbReference type="SUPFAM" id="SSF57716">
    <property type="entry name" value="Glucocorticoid receptor-like (DNA-binding domain)"/>
    <property type="match status" value="1"/>
</dbReference>
<dbReference type="SUPFAM" id="SSF52540">
    <property type="entry name" value="P-loop containing nucleoside triphosphate hydrolases"/>
    <property type="match status" value="1"/>
</dbReference>
<dbReference type="PROSITE" id="PS51902">
    <property type="entry name" value="CLPX_ZB"/>
    <property type="match status" value="1"/>
</dbReference>
<accession>Q9Z760</accession>
<accession>Q9JQE4</accession>
<evidence type="ECO:0000255" key="1">
    <source>
        <dbReference type="HAMAP-Rule" id="MF_00175"/>
    </source>
</evidence>
<evidence type="ECO:0000255" key="2">
    <source>
        <dbReference type="PROSITE-ProRule" id="PRU01250"/>
    </source>
</evidence>